<sequence length="374" mass="40917">MAKRDYYEVLGVNRNATEAEVKKAFRRLAMKYHPDRNPGDKDAEVKFKEAREAYEVLCDSRKRASYDQFGHAGVEQTFGGAGAGGFGFGDLGDIFGDIFGDIFGGARGGQAREQRGADLAYELVLSLEEAVHGLSRTIKVPTWINCKTCNGSGAKGSSPATCPRCNGSGQMRMQHGFLQVQQTCSVCRGRGQVIKDPCTDCHGQGRQQQTKTLSVKIPPGIDTGDRIRLAGEGEAGLFGAPPGDLYVQVRVKPHPLFHREGNDLHSEVPMDFTTAALGGEMEIPTLDGSVRLTIPPETQGGKQFRLRGKGVKALRSGAVGDLICHIVVETPVKLSPEQKDYLKQFAELLKKDEKNHSPRTRNWFDSVKDFFTSK</sequence>
<accession>B6IZJ1</accession>
<protein>
    <recommendedName>
        <fullName evidence="1">Chaperone protein DnaJ</fullName>
    </recommendedName>
</protein>
<name>DNAJ_COXB2</name>
<dbReference type="EMBL" id="CP001019">
    <property type="protein sequence ID" value="ACJ18119.1"/>
    <property type="molecule type" value="Genomic_DNA"/>
</dbReference>
<dbReference type="RefSeq" id="WP_012569899.1">
    <property type="nucleotide sequence ID" value="NC_011527.1"/>
</dbReference>
<dbReference type="SMR" id="B6IZJ1"/>
<dbReference type="KEGG" id="cbg:CbuG_0719"/>
<dbReference type="HOGENOM" id="CLU_017633_0_7_6"/>
<dbReference type="GO" id="GO:0005737">
    <property type="term" value="C:cytoplasm"/>
    <property type="evidence" value="ECO:0007669"/>
    <property type="project" value="UniProtKB-SubCell"/>
</dbReference>
<dbReference type="GO" id="GO:0005524">
    <property type="term" value="F:ATP binding"/>
    <property type="evidence" value="ECO:0007669"/>
    <property type="project" value="InterPro"/>
</dbReference>
<dbReference type="GO" id="GO:0031072">
    <property type="term" value="F:heat shock protein binding"/>
    <property type="evidence" value="ECO:0007669"/>
    <property type="project" value="InterPro"/>
</dbReference>
<dbReference type="GO" id="GO:0051082">
    <property type="term" value="F:unfolded protein binding"/>
    <property type="evidence" value="ECO:0007669"/>
    <property type="project" value="UniProtKB-UniRule"/>
</dbReference>
<dbReference type="GO" id="GO:0008270">
    <property type="term" value="F:zinc ion binding"/>
    <property type="evidence" value="ECO:0007669"/>
    <property type="project" value="UniProtKB-UniRule"/>
</dbReference>
<dbReference type="GO" id="GO:0051085">
    <property type="term" value="P:chaperone cofactor-dependent protein refolding"/>
    <property type="evidence" value="ECO:0007669"/>
    <property type="project" value="TreeGrafter"/>
</dbReference>
<dbReference type="GO" id="GO:0006260">
    <property type="term" value="P:DNA replication"/>
    <property type="evidence" value="ECO:0007669"/>
    <property type="project" value="UniProtKB-KW"/>
</dbReference>
<dbReference type="GO" id="GO:0042026">
    <property type="term" value="P:protein refolding"/>
    <property type="evidence" value="ECO:0007669"/>
    <property type="project" value="TreeGrafter"/>
</dbReference>
<dbReference type="GO" id="GO:0009408">
    <property type="term" value="P:response to heat"/>
    <property type="evidence" value="ECO:0007669"/>
    <property type="project" value="InterPro"/>
</dbReference>
<dbReference type="CDD" id="cd06257">
    <property type="entry name" value="DnaJ"/>
    <property type="match status" value="1"/>
</dbReference>
<dbReference type="CDD" id="cd10747">
    <property type="entry name" value="DnaJ_C"/>
    <property type="match status" value="1"/>
</dbReference>
<dbReference type="CDD" id="cd10719">
    <property type="entry name" value="DnaJ_zf"/>
    <property type="match status" value="1"/>
</dbReference>
<dbReference type="FunFam" id="1.10.287.110:FF:000160">
    <property type="entry name" value="Chaperone protein DnaJ"/>
    <property type="match status" value="1"/>
</dbReference>
<dbReference type="FunFam" id="2.10.230.10:FF:000002">
    <property type="entry name" value="Molecular chaperone DnaJ"/>
    <property type="match status" value="1"/>
</dbReference>
<dbReference type="FunFam" id="2.60.260.20:FF:000004">
    <property type="entry name" value="Molecular chaperone DnaJ"/>
    <property type="match status" value="1"/>
</dbReference>
<dbReference type="Gene3D" id="1.10.287.110">
    <property type="entry name" value="DnaJ domain"/>
    <property type="match status" value="1"/>
</dbReference>
<dbReference type="Gene3D" id="2.10.230.10">
    <property type="entry name" value="Heat shock protein DnaJ, cysteine-rich domain"/>
    <property type="match status" value="1"/>
</dbReference>
<dbReference type="Gene3D" id="2.60.260.20">
    <property type="entry name" value="Urease metallochaperone UreE, N-terminal domain"/>
    <property type="match status" value="2"/>
</dbReference>
<dbReference type="HAMAP" id="MF_01152">
    <property type="entry name" value="DnaJ"/>
    <property type="match status" value="1"/>
</dbReference>
<dbReference type="InterPro" id="IPR012724">
    <property type="entry name" value="DnaJ"/>
</dbReference>
<dbReference type="InterPro" id="IPR002939">
    <property type="entry name" value="DnaJ_C"/>
</dbReference>
<dbReference type="InterPro" id="IPR001623">
    <property type="entry name" value="DnaJ_domain"/>
</dbReference>
<dbReference type="InterPro" id="IPR018253">
    <property type="entry name" value="DnaJ_domain_CS"/>
</dbReference>
<dbReference type="InterPro" id="IPR008971">
    <property type="entry name" value="HSP40/DnaJ_pept-bd"/>
</dbReference>
<dbReference type="InterPro" id="IPR001305">
    <property type="entry name" value="HSP_DnaJ_Cys-rich_dom"/>
</dbReference>
<dbReference type="InterPro" id="IPR036410">
    <property type="entry name" value="HSP_DnaJ_Cys-rich_dom_sf"/>
</dbReference>
<dbReference type="InterPro" id="IPR036869">
    <property type="entry name" value="J_dom_sf"/>
</dbReference>
<dbReference type="NCBIfam" id="TIGR02349">
    <property type="entry name" value="DnaJ_bact"/>
    <property type="match status" value="1"/>
</dbReference>
<dbReference type="NCBIfam" id="NF008035">
    <property type="entry name" value="PRK10767.1"/>
    <property type="match status" value="1"/>
</dbReference>
<dbReference type="PANTHER" id="PTHR43096:SF48">
    <property type="entry name" value="CHAPERONE PROTEIN DNAJ"/>
    <property type="match status" value="1"/>
</dbReference>
<dbReference type="PANTHER" id="PTHR43096">
    <property type="entry name" value="DNAJ HOMOLOG 1, MITOCHONDRIAL-RELATED"/>
    <property type="match status" value="1"/>
</dbReference>
<dbReference type="Pfam" id="PF00226">
    <property type="entry name" value="DnaJ"/>
    <property type="match status" value="1"/>
</dbReference>
<dbReference type="Pfam" id="PF01556">
    <property type="entry name" value="DnaJ_C"/>
    <property type="match status" value="1"/>
</dbReference>
<dbReference type="Pfam" id="PF00684">
    <property type="entry name" value="DnaJ_CXXCXGXG"/>
    <property type="match status" value="1"/>
</dbReference>
<dbReference type="PRINTS" id="PR00625">
    <property type="entry name" value="JDOMAIN"/>
</dbReference>
<dbReference type="SMART" id="SM00271">
    <property type="entry name" value="DnaJ"/>
    <property type="match status" value="1"/>
</dbReference>
<dbReference type="SUPFAM" id="SSF46565">
    <property type="entry name" value="Chaperone J-domain"/>
    <property type="match status" value="1"/>
</dbReference>
<dbReference type="SUPFAM" id="SSF57938">
    <property type="entry name" value="DnaJ/Hsp40 cysteine-rich domain"/>
    <property type="match status" value="1"/>
</dbReference>
<dbReference type="SUPFAM" id="SSF49493">
    <property type="entry name" value="HSP40/DnaJ peptide-binding domain"/>
    <property type="match status" value="2"/>
</dbReference>
<dbReference type="PROSITE" id="PS00636">
    <property type="entry name" value="DNAJ_1"/>
    <property type="match status" value="1"/>
</dbReference>
<dbReference type="PROSITE" id="PS50076">
    <property type="entry name" value="DNAJ_2"/>
    <property type="match status" value="1"/>
</dbReference>
<dbReference type="PROSITE" id="PS51188">
    <property type="entry name" value="ZF_CR"/>
    <property type="match status" value="1"/>
</dbReference>
<reference key="1">
    <citation type="journal article" date="2009" name="Infect. Immun.">
        <title>Comparative genomics reveal extensive transposon-mediated genomic plasticity and diversity among potential effector proteins within the genus Coxiella.</title>
        <authorList>
            <person name="Beare P.A."/>
            <person name="Unsworth N."/>
            <person name="Andoh M."/>
            <person name="Voth D.E."/>
            <person name="Omsland A."/>
            <person name="Gilk S.D."/>
            <person name="Williams K.P."/>
            <person name="Sobral B.W."/>
            <person name="Kupko J.J. III"/>
            <person name="Porcella S.F."/>
            <person name="Samuel J.E."/>
            <person name="Heinzen R.A."/>
        </authorList>
    </citation>
    <scope>NUCLEOTIDE SEQUENCE [LARGE SCALE GENOMIC DNA]</scope>
    <source>
        <strain>CbuG_Q212</strain>
    </source>
</reference>
<evidence type="ECO:0000255" key="1">
    <source>
        <dbReference type="HAMAP-Rule" id="MF_01152"/>
    </source>
</evidence>
<comment type="function">
    <text evidence="1">Participates actively in the response to hyperosmotic and heat shock by preventing the aggregation of stress-denatured proteins and by disaggregating proteins, also in an autonomous, DnaK-independent fashion. Unfolded proteins bind initially to DnaJ; upon interaction with the DnaJ-bound protein, DnaK hydrolyzes its bound ATP, resulting in the formation of a stable complex. GrpE releases ADP from DnaK; ATP binding to DnaK triggers the release of the substrate protein, thus completing the reaction cycle. Several rounds of ATP-dependent interactions between DnaJ, DnaK and GrpE are required for fully efficient folding. Also involved, together with DnaK and GrpE, in the DNA replication of plasmids through activation of initiation proteins.</text>
</comment>
<comment type="cofactor">
    <cofactor evidence="1">
        <name>Zn(2+)</name>
        <dbReference type="ChEBI" id="CHEBI:29105"/>
    </cofactor>
    <text evidence="1">Binds 2 Zn(2+) ions per monomer.</text>
</comment>
<comment type="subunit">
    <text evidence="1">Homodimer.</text>
</comment>
<comment type="subcellular location">
    <subcellularLocation>
        <location evidence="1">Cytoplasm</location>
    </subcellularLocation>
</comment>
<comment type="domain">
    <text evidence="1">The J domain is necessary and sufficient to stimulate DnaK ATPase activity. Zinc center 1 plays an important role in the autonomous, DnaK-independent chaperone activity of DnaJ. Zinc center 2 is essential for interaction with DnaK and for DnaJ activity.</text>
</comment>
<comment type="similarity">
    <text evidence="1">Belongs to the DnaJ family.</text>
</comment>
<keyword id="KW-0143">Chaperone</keyword>
<keyword id="KW-0963">Cytoplasm</keyword>
<keyword id="KW-0235">DNA replication</keyword>
<keyword id="KW-0479">Metal-binding</keyword>
<keyword id="KW-0677">Repeat</keyword>
<keyword id="KW-0346">Stress response</keyword>
<keyword id="KW-0862">Zinc</keyword>
<keyword id="KW-0863">Zinc-finger</keyword>
<gene>
    <name evidence="1" type="primary">dnaJ</name>
    <name type="ordered locus">CbuG_0719</name>
</gene>
<feature type="chain" id="PRO_1000137674" description="Chaperone protein DnaJ">
    <location>
        <begin position="1"/>
        <end position="374"/>
    </location>
</feature>
<feature type="domain" description="J" evidence="1">
    <location>
        <begin position="5"/>
        <end position="70"/>
    </location>
</feature>
<feature type="repeat" description="CXXCXGXG motif">
    <location>
        <begin position="146"/>
        <end position="153"/>
    </location>
</feature>
<feature type="repeat" description="CXXCXGXG motif">
    <location>
        <begin position="162"/>
        <end position="169"/>
    </location>
</feature>
<feature type="repeat" description="CXXCXGXG motif">
    <location>
        <begin position="184"/>
        <end position="191"/>
    </location>
</feature>
<feature type="repeat" description="CXXCXGXG motif">
    <location>
        <begin position="198"/>
        <end position="205"/>
    </location>
</feature>
<feature type="zinc finger region" description="CR-type" evidence="1">
    <location>
        <begin position="133"/>
        <end position="210"/>
    </location>
</feature>
<feature type="binding site" evidence="1">
    <location>
        <position position="146"/>
    </location>
    <ligand>
        <name>Zn(2+)</name>
        <dbReference type="ChEBI" id="CHEBI:29105"/>
        <label>1</label>
    </ligand>
</feature>
<feature type="binding site" evidence="1">
    <location>
        <position position="149"/>
    </location>
    <ligand>
        <name>Zn(2+)</name>
        <dbReference type="ChEBI" id="CHEBI:29105"/>
        <label>1</label>
    </ligand>
</feature>
<feature type="binding site" evidence="1">
    <location>
        <position position="162"/>
    </location>
    <ligand>
        <name>Zn(2+)</name>
        <dbReference type="ChEBI" id="CHEBI:29105"/>
        <label>2</label>
    </ligand>
</feature>
<feature type="binding site" evidence="1">
    <location>
        <position position="165"/>
    </location>
    <ligand>
        <name>Zn(2+)</name>
        <dbReference type="ChEBI" id="CHEBI:29105"/>
        <label>2</label>
    </ligand>
</feature>
<feature type="binding site" evidence="1">
    <location>
        <position position="184"/>
    </location>
    <ligand>
        <name>Zn(2+)</name>
        <dbReference type="ChEBI" id="CHEBI:29105"/>
        <label>2</label>
    </ligand>
</feature>
<feature type="binding site" evidence="1">
    <location>
        <position position="187"/>
    </location>
    <ligand>
        <name>Zn(2+)</name>
        <dbReference type="ChEBI" id="CHEBI:29105"/>
        <label>2</label>
    </ligand>
</feature>
<feature type="binding site" evidence="1">
    <location>
        <position position="198"/>
    </location>
    <ligand>
        <name>Zn(2+)</name>
        <dbReference type="ChEBI" id="CHEBI:29105"/>
        <label>1</label>
    </ligand>
</feature>
<feature type="binding site" evidence="1">
    <location>
        <position position="201"/>
    </location>
    <ligand>
        <name>Zn(2+)</name>
        <dbReference type="ChEBI" id="CHEBI:29105"/>
        <label>1</label>
    </ligand>
</feature>
<organism>
    <name type="scientific">Coxiella burnetii (strain CbuG_Q212)</name>
    <name type="common">Coxiella burnetii (strain Q212)</name>
    <dbReference type="NCBI Taxonomy" id="434923"/>
    <lineage>
        <taxon>Bacteria</taxon>
        <taxon>Pseudomonadati</taxon>
        <taxon>Pseudomonadota</taxon>
        <taxon>Gammaproteobacteria</taxon>
        <taxon>Legionellales</taxon>
        <taxon>Coxiellaceae</taxon>
        <taxon>Coxiella</taxon>
    </lineage>
</organism>
<proteinExistence type="inferred from homology"/>